<feature type="chain" id="PRO_0000057507" description="tRNA pseudouridine synthase A">
    <location>
        <begin position="1"/>
        <end position="275"/>
    </location>
</feature>
<feature type="active site" description="Nucleophile" evidence="1">
    <location>
        <position position="56"/>
    </location>
</feature>
<feature type="binding site" evidence="1">
    <location>
        <position position="109"/>
    </location>
    <ligand>
        <name>substrate</name>
    </ligand>
</feature>
<evidence type="ECO:0000255" key="1">
    <source>
        <dbReference type="HAMAP-Rule" id="MF_00171"/>
    </source>
</evidence>
<organism>
    <name type="scientific">Methanothermobacter thermautotrophicus (strain ATCC 29096 / DSM 1053 / JCM 10044 / NBRC 100330 / Delta H)</name>
    <name type="common">Methanobacterium thermoautotrophicum</name>
    <dbReference type="NCBI Taxonomy" id="187420"/>
    <lineage>
        <taxon>Archaea</taxon>
        <taxon>Methanobacteriati</taxon>
        <taxon>Methanobacteriota</taxon>
        <taxon>Methanomada group</taxon>
        <taxon>Methanobacteria</taxon>
        <taxon>Methanobacteriales</taxon>
        <taxon>Methanobacteriaceae</taxon>
        <taxon>Methanothermobacter</taxon>
    </lineage>
</organism>
<protein>
    <recommendedName>
        <fullName evidence="1">tRNA pseudouridine synthase A</fullName>
        <ecNumber evidence="1">5.4.99.12</ecNumber>
    </recommendedName>
    <alternativeName>
        <fullName evidence="1">tRNA pseudouridine(38-40) synthase</fullName>
    </alternativeName>
    <alternativeName>
        <fullName evidence="1">tRNA pseudouridylate synthase I</fullName>
    </alternativeName>
    <alternativeName>
        <fullName evidence="1">tRNA-uridine isomerase I</fullName>
    </alternativeName>
</protein>
<reference key="1">
    <citation type="journal article" date="1997" name="J. Bacteriol.">
        <title>Complete genome sequence of Methanobacterium thermoautotrophicum deltaH: functional analysis and comparative genomics.</title>
        <authorList>
            <person name="Smith D.R."/>
            <person name="Doucette-Stamm L.A."/>
            <person name="Deloughery C."/>
            <person name="Lee H.-M."/>
            <person name="Dubois J."/>
            <person name="Aldredge T."/>
            <person name="Bashirzadeh R."/>
            <person name="Blakely D."/>
            <person name="Cook R."/>
            <person name="Gilbert K."/>
            <person name="Harrison D."/>
            <person name="Hoang L."/>
            <person name="Keagle P."/>
            <person name="Lumm W."/>
            <person name="Pothier B."/>
            <person name="Qiu D."/>
            <person name="Spadafora R."/>
            <person name="Vicare R."/>
            <person name="Wang Y."/>
            <person name="Wierzbowski J."/>
            <person name="Gibson R."/>
            <person name="Jiwani N."/>
            <person name="Caruso A."/>
            <person name="Bush D."/>
            <person name="Safer H."/>
            <person name="Patwell D."/>
            <person name="Prabhakar S."/>
            <person name="McDougall S."/>
            <person name="Shimer G."/>
            <person name="Goyal A."/>
            <person name="Pietrovski S."/>
            <person name="Church G.M."/>
            <person name="Daniels C.J."/>
            <person name="Mao J.-I."/>
            <person name="Rice P."/>
            <person name="Noelling J."/>
            <person name="Reeve J.N."/>
        </authorList>
    </citation>
    <scope>NUCLEOTIDE SEQUENCE [LARGE SCALE GENOMIC DNA]</scope>
    <source>
        <strain>ATCC 29096 / DSM 1053 / JCM 10044 / NBRC 100330 / Delta H</strain>
    </source>
</reference>
<sequence length="275" mass="32253">MRKIALKVAYIGTNYHGFQRQPDVPTVEGKLLEALEGAGIIEDPKRARFQIAGRTDRGVHALGNFVSFFTEEDIHVNQINDLLPRDIRVLAWASVMYPFKVRYPLERHYRYILHREESMDTYSMAEAAAHFRGTHDFSNFSRRSDRDPVRRINDVRISEVGDSIIIDVYGESFLWQMVRKMVRALLMVSEGELAPDDMAGLLDTDRRVFLEPMPPENLILMDLKYGVKIKLRHDEYAFKRFISLLEEEFKVYREMSMVRRAMSDHLRDLQEHELD</sequence>
<dbReference type="EC" id="5.4.99.12" evidence="1"/>
<dbReference type="EMBL" id="AE000666">
    <property type="protein sequence ID" value="AAB85338.1"/>
    <property type="molecule type" value="Genomic_DNA"/>
</dbReference>
<dbReference type="PIR" id="B69212">
    <property type="entry name" value="B69212"/>
</dbReference>
<dbReference type="RefSeq" id="WP_010876473.1">
    <property type="nucleotide sequence ID" value="NC_000916.1"/>
</dbReference>
<dbReference type="SMR" id="O26928"/>
<dbReference type="FunCoup" id="O26928">
    <property type="interactions" value="184"/>
</dbReference>
<dbReference type="STRING" id="187420.MTH_840"/>
<dbReference type="PaxDb" id="187420-MTH_840"/>
<dbReference type="EnsemblBacteria" id="AAB85338">
    <property type="protein sequence ID" value="AAB85338"/>
    <property type="gene ID" value="MTH_840"/>
</dbReference>
<dbReference type="GeneID" id="1471248"/>
<dbReference type="GeneID" id="77401374"/>
<dbReference type="KEGG" id="mth:MTH_840"/>
<dbReference type="PATRIC" id="fig|187420.15.peg.823"/>
<dbReference type="HOGENOM" id="CLU_014673_4_2_2"/>
<dbReference type="InParanoid" id="O26928"/>
<dbReference type="Proteomes" id="UP000005223">
    <property type="component" value="Chromosome"/>
</dbReference>
<dbReference type="GO" id="GO:0003723">
    <property type="term" value="F:RNA binding"/>
    <property type="evidence" value="ECO:0007669"/>
    <property type="project" value="InterPro"/>
</dbReference>
<dbReference type="GO" id="GO:0160147">
    <property type="term" value="F:tRNA pseudouridine(38-40) synthase activity"/>
    <property type="evidence" value="ECO:0007669"/>
    <property type="project" value="UniProtKB-EC"/>
</dbReference>
<dbReference type="GO" id="GO:0031119">
    <property type="term" value="P:tRNA pseudouridine synthesis"/>
    <property type="evidence" value="ECO:0007669"/>
    <property type="project" value="UniProtKB-UniRule"/>
</dbReference>
<dbReference type="CDD" id="cd02866">
    <property type="entry name" value="PseudoU_synth_TruA_Archea"/>
    <property type="match status" value="1"/>
</dbReference>
<dbReference type="Gene3D" id="3.30.70.660">
    <property type="entry name" value="Pseudouridine synthase I, catalytic domain, C-terminal subdomain"/>
    <property type="match status" value="1"/>
</dbReference>
<dbReference type="Gene3D" id="3.30.70.580">
    <property type="entry name" value="Pseudouridine synthase I, catalytic domain, N-terminal subdomain"/>
    <property type="match status" value="1"/>
</dbReference>
<dbReference type="HAMAP" id="MF_00171">
    <property type="entry name" value="TruA"/>
    <property type="match status" value="1"/>
</dbReference>
<dbReference type="InterPro" id="IPR020103">
    <property type="entry name" value="PsdUridine_synth_cat_dom_sf"/>
</dbReference>
<dbReference type="InterPro" id="IPR001406">
    <property type="entry name" value="PsdUridine_synth_TruA"/>
</dbReference>
<dbReference type="InterPro" id="IPR020097">
    <property type="entry name" value="PsdUridine_synth_TruA_a/b_dom"/>
</dbReference>
<dbReference type="InterPro" id="IPR020095">
    <property type="entry name" value="PsdUridine_synth_TruA_C"/>
</dbReference>
<dbReference type="InterPro" id="IPR020094">
    <property type="entry name" value="TruA/RsuA/RluB/E/F_N"/>
</dbReference>
<dbReference type="NCBIfam" id="TIGR00071">
    <property type="entry name" value="hisT_truA"/>
    <property type="match status" value="1"/>
</dbReference>
<dbReference type="PANTHER" id="PTHR11142">
    <property type="entry name" value="PSEUDOURIDYLATE SYNTHASE"/>
    <property type="match status" value="1"/>
</dbReference>
<dbReference type="PANTHER" id="PTHR11142:SF0">
    <property type="entry name" value="TRNA PSEUDOURIDINE SYNTHASE-LIKE 1"/>
    <property type="match status" value="1"/>
</dbReference>
<dbReference type="Pfam" id="PF01416">
    <property type="entry name" value="PseudoU_synth_1"/>
    <property type="match status" value="2"/>
</dbReference>
<dbReference type="PIRSF" id="PIRSF001430">
    <property type="entry name" value="tRNA_psdUrid_synth"/>
    <property type="match status" value="1"/>
</dbReference>
<dbReference type="SUPFAM" id="SSF55120">
    <property type="entry name" value="Pseudouridine synthase"/>
    <property type="match status" value="1"/>
</dbReference>
<comment type="function">
    <text evidence="1">Formation of pseudouridine at positions 38, 39 and 40 in the anticodon stem and loop of transfer RNAs.</text>
</comment>
<comment type="catalytic activity">
    <reaction evidence="1">
        <text>uridine(38/39/40) in tRNA = pseudouridine(38/39/40) in tRNA</text>
        <dbReference type="Rhea" id="RHEA:22376"/>
        <dbReference type="Rhea" id="RHEA-COMP:10085"/>
        <dbReference type="Rhea" id="RHEA-COMP:10087"/>
        <dbReference type="ChEBI" id="CHEBI:65314"/>
        <dbReference type="ChEBI" id="CHEBI:65315"/>
        <dbReference type="EC" id="5.4.99.12"/>
    </reaction>
</comment>
<comment type="similarity">
    <text evidence="1">Belongs to the tRNA pseudouridine synthase TruA family.</text>
</comment>
<keyword id="KW-0413">Isomerase</keyword>
<keyword id="KW-1185">Reference proteome</keyword>
<keyword id="KW-0819">tRNA processing</keyword>
<gene>
    <name evidence="1" type="primary">truA</name>
    <name type="ordered locus">MTH_840</name>
</gene>
<accession>O26928</accession>
<proteinExistence type="inferred from homology"/>
<name>TRUA_METTH</name>